<dbReference type="EMBL" id="BC082044">
    <property type="protein sequence ID" value="AAH82044.1"/>
    <property type="molecule type" value="mRNA"/>
</dbReference>
<dbReference type="RefSeq" id="NP_001020202.2">
    <property type="nucleotide sequence ID" value="NM_001025031.1"/>
</dbReference>
<dbReference type="FunCoup" id="Q66H38">
    <property type="interactions" value="6"/>
</dbReference>
<dbReference type="STRING" id="10116.ENSRNOP00000030691"/>
<dbReference type="iPTMnet" id="Q66H38"/>
<dbReference type="PhosphoSitePlus" id="Q66H38"/>
<dbReference type="PaxDb" id="10116-ENSRNOP00000030691"/>
<dbReference type="GeneID" id="497888"/>
<dbReference type="KEGG" id="rno:497888"/>
<dbReference type="UCSC" id="RGD:1563555">
    <property type="organism name" value="rat"/>
</dbReference>
<dbReference type="AGR" id="RGD:1563555"/>
<dbReference type="CTD" id="153745"/>
<dbReference type="RGD" id="1563555">
    <property type="gene designation" value="Garin3"/>
</dbReference>
<dbReference type="eggNOG" id="ENOG502S0XQ">
    <property type="taxonomic scope" value="Eukaryota"/>
</dbReference>
<dbReference type="HOGENOM" id="CLU_035424_0_0_1"/>
<dbReference type="InParanoid" id="Q66H38"/>
<dbReference type="OrthoDB" id="9836864at2759"/>
<dbReference type="PhylomeDB" id="Q66H38"/>
<dbReference type="PRO" id="PR:Q66H38"/>
<dbReference type="Proteomes" id="UP000002494">
    <property type="component" value="Unplaced"/>
</dbReference>
<dbReference type="GO" id="GO:0015030">
    <property type="term" value="C:Cajal body"/>
    <property type="evidence" value="ECO:0007669"/>
    <property type="project" value="UniProtKB-SubCell"/>
</dbReference>
<dbReference type="GO" id="GO:0005794">
    <property type="term" value="C:Golgi apparatus"/>
    <property type="evidence" value="ECO:0000250"/>
    <property type="project" value="UniProtKB"/>
</dbReference>
<dbReference type="GO" id="GO:0061827">
    <property type="term" value="C:sperm head"/>
    <property type="evidence" value="ECO:0000266"/>
    <property type="project" value="RGD"/>
</dbReference>
<dbReference type="GO" id="GO:0001675">
    <property type="term" value="P:acrosome assembly"/>
    <property type="evidence" value="ECO:0000266"/>
    <property type="project" value="RGD"/>
</dbReference>
<dbReference type="GO" id="GO:0000902">
    <property type="term" value="P:cell morphogenesis"/>
    <property type="evidence" value="ECO:0000266"/>
    <property type="project" value="RGD"/>
</dbReference>
<dbReference type="GO" id="GO:0010467">
    <property type="term" value="P:gene expression"/>
    <property type="evidence" value="ECO:0000266"/>
    <property type="project" value="RGD"/>
</dbReference>
<dbReference type="GO" id="GO:0007338">
    <property type="term" value="P:single fertilization"/>
    <property type="evidence" value="ECO:0000266"/>
    <property type="project" value="RGD"/>
</dbReference>
<dbReference type="GO" id="GO:0007033">
    <property type="term" value="P:vacuole organization"/>
    <property type="evidence" value="ECO:0000266"/>
    <property type="project" value="RGD"/>
</dbReference>
<dbReference type="InterPro" id="IPR022168">
    <property type="entry name" value="GARIL-like_Rab2B-bd"/>
</dbReference>
<dbReference type="PANTHER" id="PTHR22574">
    <property type="match status" value="1"/>
</dbReference>
<dbReference type="PANTHER" id="PTHR22574:SF2">
    <property type="entry name" value="GOLGI-ASSOCIATED RAB2 INTERACTOR PROTEIN 3"/>
    <property type="match status" value="1"/>
</dbReference>
<dbReference type="Pfam" id="PF12480">
    <property type="entry name" value="GARIL_Rab2_bd"/>
    <property type="match status" value="1"/>
</dbReference>
<evidence type="ECO:0000250" key="1">
    <source>
        <dbReference type="UniProtKB" id="Q5STT6"/>
    </source>
</evidence>
<evidence type="ECO:0000250" key="2">
    <source>
        <dbReference type="UniProtKB" id="Q8TC56"/>
    </source>
</evidence>
<evidence type="ECO:0000255" key="3"/>
<evidence type="ECO:0000256" key="4">
    <source>
        <dbReference type="SAM" id="MobiDB-lite"/>
    </source>
</evidence>
<evidence type="ECO:0000305" key="5"/>
<evidence type="ECO:0007744" key="6">
    <source>
    </source>
</evidence>
<reference key="1">
    <citation type="journal article" date="2004" name="Genome Res.">
        <title>The status, quality, and expansion of the NIH full-length cDNA project: the Mammalian Gene Collection (MGC).</title>
        <authorList>
            <consortium name="The MGC Project Team"/>
        </authorList>
    </citation>
    <scope>NUCLEOTIDE SEQUENCE [LARGE SCALE MRNA]</scope>
    <source>
        <tissue>Testis</tissue>
    </source>
</reference>
<reference key="2">
    <citation type="journal article" date="2012" name="Nat. Commun.">
        <title>Quantitative maps of protein phosphorylation sites across 14 different rat organs and tissues.</title>
        <authorList>
            <person name="Lundby A."/>
            <person name="Secher A."/>
            <person name="Lage K."/>
            <person name="Nordsborg N.B."/>
            <person name="Dmytriyev A."/>
            <person name="Lundby C."/>
            <person name="Olsen J.V."/>
        </authorList>
    </citation>
    <scope>PHOSPHORYLATION [LARGE SCALE ANALYSIS] AT SER-378; SER-634 AND SER-636</scope>
    <scope>IDENTIFICATION BY MASS SPECTROMETRY [LARGE SCALE ANALYSIS]</scope>
</reference>
<accession>Q66H38</accession>
<name>GAR3_RAT</name>
<feature type="chain" id="PRO_0000285645" description="Golgi-associated RAB2B interactor protein 3">
    <location>
        <begin position="1"/>
        <end position="647"/>
    </location>
</feature>
<feature type="region of interest" description="Disordered" evidence="4">
    <location>
        <begin position="188"/>
        <end position="220"/>
    </location>
</feature>
<feature type="region of interest" description="Disordered" evidence="4">
    <location>
        <begin position="267"/>
        <end position="296"/>
    </location>
</feature>
<feature type="region of interest" description="Disordered" evidence="4">
    <location>
        <begin position="361"/>
        <end position="384"/>
    </location>
</feature>
<feature type="region of interest" description="Disordered" evidence="4">
    <location>
        <begin position="465"/>
        <end position="573"/>
    </location>
</feature>
<feature type="short sequence motif" description="Bipartite nuclear localization signal" evidence="3">
    <location>
        <begin position="494"/>
        <end position="511"/>
    </location>
</feature>
<feature type="compositionally biased region" description="Polar residues" evidence="4">
    <location>
        <begin position="188"/>
        <end position="202"/>
    </location>
</feature>
<feature type="compositionally biased region" description="Basic and acidic residues" evidence="4">
    <location>
        <begin position="205"/>
        <end position="214"/>
    </location>
</feature>
<feature type="compositionally biased region" description="Polar residues" evidence="4">
    <location>
        <begin position="361"/>
        <end position="378"/>
    </location>
</feature>
<feature type="compositionally biased region" description="Basic and acidic residues" evidence="4">
    <location>
        <begin position="478"/>
        <end position="491"/>
    </location>
</feature>
<feature type="compositionally biased region" description="Basic residues" evidence="4">
    <location>
        <begin position="492"/>
        <end position="501"/>
    </location>
</feature>
<feature type="compositionally biased region" description="Basic and acidic residues" evidence="4">
    <location>
        <begin position="528"/>
        <end position="556"/>
    </location>
</feature>
<feature type="modified residue" description="Phosphoserine" evidence="6">
    <location>
        <position position="378"/>
    </location>
</feature>
<feature type="modified residue" description="Phosphoserine" evidence="6">
    <location>
        <position position="634"/>
    </location>
</feature>
<feature type="modified residue" description="Phosphoserine" evidence="6">
    <location>
        <position position="636"/>
    </location>
</feature>
<gene>
    <name type="primary">Garin3</name>
    <name type="synonym">Fam71b</name>
</gene>
<sequence length="647" mass="68071">MSSECLLPYYTAHSYRSMGVFNTSMGNLQRQLYKGGEYDIFKYAPMFESDFIQISKKGEVIDVHNRVRMVTVCIASTSPVLPLPDVMLLARPAKVCEEHARRARFIKGRGYKPSKTLELTRLLPLKFVKISIHDHEKQQLRLKLATGRTFYLQLCPSSDAREDLFCYWEKLVYLLRPPVNSCISNPSIPTADTSTETKSTLVSEIHGEGDRDSKFQTSQDVSEATSAAFAGGERTQPNIAAILTTGLAKARAAGAAAGTGAAGTAGTAGAAGATGAAGATGAAGSARAAGGAGSARAAGATGSARAAGATGSARAAGATGSARAAGGNTAAAVMTPLAGLARAGTPTSPVSGVISIAATTSKSPGSGQVATGLTGTASKDQERSESSKAMAVVANITTESVDVVLAGAASFTSESPSAEGDAYGSPDTGLNVAFAGSITTKGPAEDKPEAPLVSTLQSEGYMCERDGSQKVSHTSSETQKEKRERRESDRKGSRKSSHHQRTGASRHSSSKDKGRKTSSYRSVSGHGKTREDKKEKGRGSLRDQRHSSSYRSESRTGHKSRKNRPAASGGFVSKRATKIRSFFRAFLVRPTLKTENTSGERGGVDIVTKLVEKQDIETTVEKSKDLEFSDTMASESMEKIILETKPI</sequence>
<protein>
    <recommendedName>
        <fullName>Golgi-associated RAB2B interactor protein 3</fullName>
    </recommendedName>
    <alternativeName>
        <fullName>Protein FAM71B</fullName>
    </alternativeName>
</protein>
<keyword id="KW-0333">Golgi apparatus</keyword>
<keyword id="KW-0539">Nucleus</keyword>
<keyword id="KW-0597">Phosphoprotein</keyword>
<keyword id="KW-1185">Reference proteome</keyword>
<proteinExistence type="evidence at protein level"/>
<organism>
    <name type="scientific">Rattus norvegicus</name>
    <name type="common">Rat</name>
    <dbReference type="NCBI Taxonomy" id="10116"/>
    <lineage>
        <taxon>Eukaryota</taxon>
        <taxon>Metazoa</taxon>
        <taxon>Chordata</taxon>
        <taxon>Craniata</taxon>
        <taxon>Vertebrata</taxon>
        <taxon>Euteleostomi</taxon>
        <taxon>Mammalia</taxon>
        <taxon>Eutheria</taxon>
        <taxon>Euarchontoglires</taxon>
        <taxon>Glires</taxon>
        <taxon>Rodentia</taxon>
        <taxon>Myomorpha</taxon>
        <taxon>Muroidea</taxon>
        <taxon>Muridae</taxon>
        <taxon>Murinae</taxon>
        <taxon>Rattus</taxon>
    </lineage>
</organism>
<comment type="function">
    <text evidence="2">May be involved in RNA biogenesis.</text>
</comment>
<comment type="subunit">
    <text evidence="1 2">Interacts (via N-terminus) with RAB2B (in GTP-bound form) (By similarity). Interacts with FRG1 (By similarity).</text>
</comment>
<comment type="subcellular location">
    <subcellularLocation>
        <location evidence="1">Golgi apparatus</location>
    </subcellularLocation>
    <subcellularLocation>
        <location evidence="2">Nucleus</location>
        <location evidence="2">Cajal body</location>
    </subcellularLocation>
</comment>
<comment type="similarity">
    <text evidence="5">Belongs to the GARIN family.</text>
</comment>